<name>PCDG6_HUMAN</name>
<evidence type="ECO:0000250" key="1"/>
<evidence type="ECO:0000255" key="2"/>
<evidence type="ECO:0000255" key="3">
    <source>
        <dbReference type="PROSITE-ProRule" id="PRU00043"/>
    </source>
</evidence>
<evidence type="ECO:0000256" key="4">
    <source>
        <dbReference type="SAM" id="MobiDB-lite"/>
    </source>
</evidence>
<evidence type="ECO:0000303" key="5">
    <source>
    </source>
</evidence>
<evidence type="ECO:0000303" key="6">
    <source>
    </source>
</evidence>
<sequence length="932" mass="100871">MAPPQRHPQRSEQVLLLTLLGTLWGAAAAQIRYSIPEELEKGSFVGNIVKDLGLEPQELAEHGVRIVSRGRMQLFSLNPRNGSLVTAGRIDREELCAQSPRCLVSFNILVEDKLNLYPVEVEIVDINDNTPRFLKEELEVKILENAAPSSRFPLMEVYDPDVGMNSLQGFKLSGNSHFSVDVQSEAHGPKYPELVLEGTLDREGEAVYRLVLTAMDGGDPVRSSVAQILVTVLDVNDNTPMFTQPVYRVSVPENLPVGTPVLAVTATDQDEGVHGEVTYSFVKITEKISQIFCLNVLTGEISTSANLDYEDSSFYELGVEARDGPGLRDRAKVLITILDVNDNVPEVVVTSGSRTIAESAPPGTVIALFQVFDRDSGLNGLVTCSIPRSLPFELEKSVGNYYRLVTNAALDREEVFLYNITVTATDKGTPPLSTETIISLNVADTNDNPPTFPHSSYSVYVLENNPRGASIFSVNALDPDVDQNAQVSYSLAEDTLQGAPLSSYVSINSDTGILYALRSFDYEQLRDLQLWVTASDSGDPPLSSNVSLSLFVLDQNDNAPEILYPALPTDGSTGVELAPRSAEPGYLVTKVVAVDRDSGQNAWLSYRLLKASEPGLFSVGLHTGEVRTARALLDRDALKQSLVVAVQDHGQPPLSATVTLTVAVADRIPDILADLGSLEPSAKPNDSDLTLYLVVAVAAVSCVFLAFVIVLLALRLQRWHKSRLLQASGGGLASMPGSHFVGVEGVRAFLQTYSHEVSLTADSRKSHLIFPQPNYADTLINQESYEKSEPLLITQDLLETKGEPRQLQQAPPNTDWRFSQAQRPGTSGSQNGDDTGTWPNNQFDTEMLQAMILASASEAADGSSTLGGGAGTMGLSARYGPQFTLQHVPDYRQNVYIPGSNATLTNAAGKRDGKAPAGGNGNKKKSGKKEKK</sequence>
<comment type="function">
    <text>Potential calcium-dependent cell-adhesion protein. May be involved in the establishment and maintenance of specific neuronal connections in the brain.</text>
</comment>
<comment type="subcellular location">
    <subcellularLocation>
        <location evidence="1">Cell membrane</location>
        <topology evidence="1">Single-pass type I membrane protein</topology>
    </subcellularLocation>
</comment>
<comment type="alternative products">
    <event type="alternative splicing"/>
    <isoform>
        <id>Q9Y5G7-1</id>
        <name>1</name>
        <sequence type="displayed"/>
    </isoform>
    <isoform>
        <id>Q9Y5G7-2</id>
        <name>2</name>
        <name>Short</name>
        <sequence type="described" ref="VSP_008669 VSP_008670"/>
    </isoform>
</comment>
<keyword id="KW-0025">Alternative splicing</keyword>
<keyword id="KW-0106">Calcium</keyword>
<keyword id="KW-0130">Cell adhesion</keyword>
<keyword id="KW-1003">Cell membrane</keyword>
<keyword id="KW-0325">Glycoprotein</keyword>
<keyword id="KW-0472">Membrane</keyword>
<keyword id="KW-1267">Proteomics identification</keyword>
<keyword id="KW-1185">Reference proteome</keyword>
<keyword id="KW-0677">Repeat</keyword>
<keyword id="KW-0732">Signal</keyword>
<keyword id="KW-0812">Transmembrane</keyword>
<keyword id="KW-1133">Transmembrane helix</keyword>
<reference key="1">
    <citation type="journal article" date="1999" name="Cell">
        <title>A striking organization of a large family of human neural cadherin-like cell adhesion genes.</title>
        <authorList>
            <person name="Wu Q."/>
            <person name="Maniatis T."/>
        </authorList>
    </citation>
    <scope>NUCLEOTIDE SEQUENCE [MRNA] (ISOFORMS 1 AND 2)</scope>
    <source>
        <tissue>Brain</tissue>
    </source>
</reference>
<reference key="2">
    <citation type="submission" date="2005-09" db="EMBL/GenBank/DDBJ databases">
        <authorList>
            <person name="Mural R.J."/>
            <person name="Istrail S."/>
            <person name="Sutton G.G."/>
            <person name="Florea L."/>
            <person name="Halpern A.L."/>
            <person name="Mobarry C.M."/>
            <person name="Lippert R."/>
            <person name="Walenz B."/>
            <person name="Shatkay H."/>
            <person name="Dew I."/>
            <person name="Miller J.R."/>
            <person name="Flanigan M.J."/>
            <person name="Edwards N.J."/>
            <person name="Bolanos R."/>
            <person name="Fasulo D."/>
            <person name="Halldorsson B.V."/>
            <person name="Hannenhalli S."/>
            <person name="Turner R."/>
            <person name="Yooseph S."/>
            <person name="Lu F."/>
            <person name="Nusskern D.R."/>
            <person name="Shue B.C."/>
            <person name="Zheng X.H."/>
            <person name="Zhong F."/>
            <person name="Delcher A.L."/>
            <person name="Huson D.H."/>
            <person name="Kravitz S.A."/>
            <person name="Mouchard L."/>
            <person name="Reinert K."/>
            <person name="Remington K.A."/>
            <person name="Clark A.G."/>
            <person name="Waterman M.S."/>
            <person name="Eichler E.E."/>
            <person name="Adams M.D."/>
            <person name="Hunkapiller M.W."/>
            <person name="Myers E.W."/>
            <person name="Venter J.C."/>
        </authorList>
    </citation>
    <scope>NUCLEOTIDE SEQUENCE [LARGE SCALE GENOMIC DNA]</scope>
</reference>
<reference key="3">
    <citation type="journal article" date="2004" name="Genome Res.">
        <title>The status, quality, and expansion of the NIH full-length cDNA project: the Mammalian Gene Collection (MGC).</title>
        <authorList>
            <consortium name="The MGC Project Team"/>
        </authorList>
    </citation>
    <scope>NUCLEOTIDE SEQUENCE [LARGE SCALE MRNA] (ISOFORMS 1 AND 2)</scope>
    <source>
        <tissue>Brain</tissue>
    </source>
</reference>
<gene>
    <name type="primary">PCDHGA6</name>
</gene>
<proteinExistence type="evidence at protein level"/>
<dbReference type="EMBL" id="AF152326">
    <property type="protein sequence ID" value="AAD43720.1"/>
    <property type="molecule type" value="mRNA"/>
</dbReference>
<dbReference type="EMBL" id="AF152513">
    <property type="protein sequence ID" value="AAD43773.1"/>
    <property type="molecule type" value="mRNA"/>
</dbReference>
<dbReference type="EMBL" id="CH471062">
    <property type="protein sequence ID" value="EAW61931.1"/>
    <property type="molecule type" value="Genomic_DNA"/>
</dbReference>
<dbReference type="EMBL" id="CH471062">
    <property type="protein sequence ID" value="EAW61929.1"/>
    <property type="molecule type" value="Genomic_DNA"/>
</dbReference>
<dbReference type="EMBL" id="BC136702">
    <property type="protein sequence ID" value="AAI36703.1"/>
    <property type="molecule type" value="mRNA"/>
</dbReference>
<dbReference type="EMBL" id="BC136703">
    <property type="protein sequence ID" value="AAI36704.1"/>
    <property type="molecule type" value="mRNA"/>
</dbReference>
<dbReference type="EMBL" id="BC146651">
    <property type="protein sequence ID" value="AAI46652.1"/>
    <property type="molecule type" value="mRNA"/>
</dbReference>
<dbReference type="CCDS" id="CCDS54926.1">
    <molecule id="Q9Y5G7-1"/>
</dbReference>
<dbReference type="CCDS" id="CCDS75335.1">
    <molecule id="Q9Y5G7-2"/>
</dbReference>
<dbReference type="RefSeq" id="NP_061742.1">
    <molecule id="Q9Y5G7-1"/>
    <property type="nucleotide sequence ID" value="NM_018919.3"/>
</dbReference>
<dbReference type="RefSeq" id="NP_114475.1">
    <molecule id="Q9Y5G7-2"/>
    <property type="nucleotide sequence ID" value="NM_032086.2"/>
</dbReference>
<dbReference type="SMR" id="Q9Y5G7"/>
<dbReference type="BioGRID" id="121049">
    <property type="interactions" value="27"/>
</dbReference>
<dbReference type="FunCoup" id="Q9Y5G7">
    <property type="interactions" value="9"/>
</dbReference>
<dbReference type="IntAct" id="Q9Y5G7">
    <property type="interactions" value="22"/>
</dbReference>
<dbReference type="STRING" id="9606.ENSP00000429601"/>
<dbReference type="GlyCosmos" id="Q9Y5G7">
    <property type="glycosylation" value="4 sites, No reported glycans"/>
</dbReference>
<dbReference type="GlyGen" id="Q9Y5G7">
    <property type="glycosylation" value="4 sites"/>
</dbReference>
<dbReference type="iPTMnet" id="Q9Y5G7"/>
<dbReference type="PhosphoSitePlus" id="Q9Y5G7"/>
<dbReference type="BioMuta" id="PCDHGA6"/>
<dbReference type="DMDM" id="37999837"/>
<dbReference type="jPOST" id="Q9Y5G7"/>
<dbReference type="MassIVE" id="Q9Y5G7"/>
<dbReference type="PaxDb" id="9606-ENSP00000429601"/>
<dbReference type="PeptideAtlas" id="Q9Y5G7"/>
<dbReference type="ProteomicsDB" id="86375">
    <molecule id="Q9Y5G7-1"/>
</dbReference>
<dbReference type="ProteomicsDB" id="86376">
    <molecule id="Q9Y5G7-2"/>
</dbReference>
<dbReference type="Antibodypedia" id="56129">
    <property type="antibodies" value="11 antibodies from 8 providers"/>
</dbReference>
<dbReference type="DNASU" id="56109"/>
<dbReference type="Ensembl" id="ENST00000517434.3">
    <molecule id="Q9Y5G7-1"/>
    <property type="protein sequence ID" value="ENSP00000429601.2"/>
    <property type="gene ID" value="ENSG00000253731.3"/>
</dbReference>
<dbReference type="Ensembl" id="ENST00000610583.1">
    <molecule id="Q9Y5G7-2"/>
    <property type="protein sequence ID" value="ENSP00000479478.1"/>
    <property type="gene ID" value="ENSG00000253731.3"/>
</dbReference>
<dbReference type="GeneID" id="56109"/>
<dbReference type="KEGG" id="hsa:56109"/>
<dbReference type="MANE-Select" id="ENST00000517434.3">
    <property type="protein sequence ID" value="ENSP00000429601.2"/>
    <property type="RefSeq nucleotide sequence ID" value="NM_018919.3"/>
    <property type="RefSeq protein sequence ID" value="NP_061742.1"/>
</dbReference>
<dbReference type="UCSC" id="uc003ljy.3">
    <molecule id="Q9Y5G7-1"/>
    <property type="organism name" value="human"/>
</dbReference>
<dbReference type="AGR" id="HGNC:8704"/>
<dbReference type="CTD" id="56109"/>
<dbReference type="DisGeNET" id="56109"/>
<dbReference type="GeneCards" id="PCDHGA6"/>
<dbReference type="HGNC" id="HGNC:8704">
    <property type="gene designation" value="PCDHGA6"/>
</dbReference>
<dbReference type="HPA" id="ENSG00000253731">
    <property type="expression patterns" value="Low tissue specificity"/>
</dbReference>
<dbReference type="MalaCards" id="PCDHGA6"/>
<dbReference type="MIM" id="604968">
    <property type="type" value="gene"/>
</dbReference>
<dbReference type="MIM" id="606293">
    <property type="type" value="gene"/>
</dbReference>
<dbReference type="neXtProt" id="NX_Q9Y5G7"/>
<dbReference type="OpenTargets" id="ENSG00000253731"/>
<dbReference type="PharmGKB" id="PA33052"/>
<dbReference type="VEuPathDB" id="HostDB:ENSG00000253731"/>
<dbReference type="eggNOG" id="KOG3594">
    <property type="taxonomic scope" value="Eukaryota"/>
</dbReference>
<dbReference type="GeneTree" id="ENSGT00940000164471"/>
<dbReference type="HOGENOM" id="CLU_006480_3_0_1"/>
<dbReference type="InParanoid" id="Q9Y5G7"/>
<dbReference type="OMA" id="NDNIPRW"/>
<dbReference type="OrthoDB" id="6252479at2759"/>
<dbReference type="PAN-GO" id="Q9Y5G7">
    <property type="GO annotations" value="2 GO annotations based on evolutionary models"/>
</dbReference>
<dbReference type="PhylomeDB" id="Q9Y5G7"/>
<dbReference type="TreeFam" id="TF332299"/>
<dbReference type="PathwayCommons" id="Q9Y5G7"/>
<dbReference type="SIGNOR" id="Q9Y5G7"/>
<dbReference type="BioGRID-ORCS" id="56109">
    <property type="hits" value="12 hits in 1098 CRISPR screens"/>
</dbReference>
<dbReference type="GenomeRNAi" id="56109"/>
<dbReference type="Pharos" id="Q9Y5G7">
    <property type="development level" value="Tdark"/>
</dbReference>
<dbReference type="PRO" id="PR:Q9Y5G7"/>
<dbReference type="Proteomes" id="UP000005640">
    <property type="component" value="Chromosome 5"/>
</dbReference>
<dbReference type="RNAct" id="Q9Y5G7">
    <property type="molecule type" value="protein"/>
</dbReference>
<dbReference type="Bgee" id="ENSG00000253731">
    <property type="expression patterns" value="Expressed in cortical plate and 105 other cell types or tissues"/>
</dbReference>
<dbReference type="GO" id="GO:0005886">
    <property type="term" value="C:plasma membrane"/>
    <property type="evidence" value="ECO:0000318"/>
    <property type="project" value="GO_Central"/>
</dbReference>
<dbReference type="GO" id="GO:0005509">
    <property type="term" value="F:calcium ion binding"/>
    <property type="evidence" value="ECO:0007669"/>
    <property type="project" value="InterPro"/>
</dbReference>
<dbReference type="GO" id="GO:0007155">
    <property type="term" value="P:cell adhesion"/>
    <property type="evidence" value="ECO:0000318"/>
    <property type="project" value="GO_Central"/>
</dbReference>
<dbReference type="GO" id="GO:0007156">
    <property type="term" value="P:homophilic cell adhesion via plasma membrane adhesion molecules"/>
    <property type="evidence" value="ECO:0007669"/>
    <property type="project" value="InterPro"/>
</dbReference>
<dbReference type="GO" id="GO:0007399">
    <property type="term" value="P:nervous system development"/>
    <property type="evidence" value="ECO:0007669"/>
    <property type="project" value="UniProtKB-ARBA"/>
</dbReference>
<dbReference type="CDD" id="cd11304">
    <property type="entry name" value="Cadherin_repeat"/>
    <property type="match status" value="6"/>
</dbReference>
<dbReference type="FunFam" id="2.60.40.60:FF:000004">
    <property type="entry name" value="Protocadherin 1 gamma 2"/>
    <property type="match status" value="1"/>
</dbReference>
<dbReference type="FunFam" id="2.60.40.60:FF:000001">
    <property type="entry name" value="Protocadherin alpha 2"/>
    <property type="match status" value="1"/>
</dbReference>
<dbReference type="FunFam" id="2.60.40.60:FF:000002">
    <property type="entry name" value="Protocadherin alpha 2"/>
    <property type="match status" value="1"/>
</dbReference>
<dbReference type="FunFam" id="2.60.40.60:FF:000006">
    <property type="entry name" value="Protocadherin alpha 2"/>
    <property type="match status" value="1"/>
</dbReference>
<dbReference type="FunFam" id="2.60.40.60:FF:000129">
    <property type="entry name" value="protocadherin alpha-C2 isoform X1"/>
    <property type="match status" value="1"/>
</dbReference>
<dbReference type="FunFam" id="2.60.40.60:FF:000018">
    <property type="entry name" value="Protocadherin gamma c3"/>
    <property type="match status" value="1"/>
</dbReference>
<dbReference type="Gene3D" id="2.60.40.60">
    <property type="entry name" value="Cadherins"/>
    <property type="match status" value="6"/>
</dbReference>
<dbReference type="InterPro" id="IPR002126">
    <property type="entry name" value="Cadherin-like_dom"/>
</dbReference>
<dbReference type="InterPro" id="IPR015919">
    <property type="entry name" value="Cadherin-like_sf"/>
</dbReference>
<dbReference type="InterPro" id="IPR032455">
    <property type="entry name" value="Cadherin_C"/>
</dbReference>
<dbReference type="InterPro" id="IPR031904">
    <property type="entry name" value="Cadherin_CBD"/>
</dbReference>
<dbReference type="InterPro" id="IPR020894">
    <property type="entry name" value="Cadherin_CS"/>
</dbReference>
<dbReference type="InterPro" id="IPR013164">
    <property type="entry name" value="Cadherin_N"/>
</dbReference>
<dbReference type="InterPro" id="IPR050174">
    <property type="entry name" value="Protocadherin/Cadherin-CA"/>
</dbReference>
<dbReference type="PANTHER" id="PTHR24028">
    <property type="entry name" value="CADHERIN-87A"/>
    <property type="match status" value="1"/>
</dbReference>
<dbReference type="PANTHER" id="PTHR24028:SF107">
    <property type="entry name" value="PROTOCADHERIN GAMMA-A6"/>
    <property type="match status" value="1"/>
</dbReference>
<dbReference type="Pfam" id="PF00028">
    <property type="entry name" value="Cadherin"/>
    <property type="match status" value="5"/>
</dbReference>
<dbReference type="Pfam" id="PF08266">
    <property type="entry name" value="Cadherin_2"/>
    <property type="match status" value="1"/>
</dbReference>
<dbReference type="Pfam" id="PF16492">
    <property type="entry name" value="Cadherin_C_2"/>
    <property type="match status" value="1"/>
</dbReference>
<dbReference type="Pfam" id="PF15974">
    <property type="entry name" value="Cadherin_tail"/>
    <property type="match status" value="1"/>
</dbReference>
<dbReference type="PRINTS" id="PR00205">
    <property type="entry name" value="CADHERIN"/>
</dbReference>
<dbReference type="SMART" id="SM00112">
    <property type="entry name" value="CA"/>
    <property type="match status" value="6"/>
</dbReference>
<dbReference type="SUPFAM" id="SSF49313">
    <property type="entry name" value="Cadherin-like"/>
    <property type="match status" value="6"/>
</dbReference>
<dbReference type="PROSITE" id="PS00232">
    <property type="entry name" value="CADHERIN_1"/>
    <property type="match status" value="5"/>
</dbReference>
<dbReference type="PROSITE" id="PS50268">
    <property type="entry name" value="CADHERIN_2"/>
    <property type="match status" value="6"/>
</dbReference>
<organism>
    <name type="scientific">Homo sapiens</name>
    <name type="common">Human</name>
    <dbReference type="NCBI Taxonomy" id="9606"/>
    <lineage>
        <taxon>Eukaryota</taxon>
        <taxon>Metazoa</taxon>
        <taxon>Chordata</taxon>
        <taxon>Craniata</taxon>
        <taxon>Vertebrata</taxon>
        <taxon>Euteleostomi</taxon>
        <taxon>Mammalia</taxon>
        <taxon>Eutheria</taxon>
        <taxon>Euarchontoglires</taxon>
        <taxon>Primates</taxon>
        <taxon>Haplorrhini</taxon>
        <taxon>Catarrhini</taxon>
        <taxon>Hominidae</taxon>
        <taxon>Homo</taxon>
    </lineage>
</organism>
<feature type="signal peptide" evidence="2">
    <location>
        <begin position="1"/>
        <end position="29"/>
    </location>
</feature>
<feature type="chain" id="PRO_0000003958" description="Protocadherin gamma-A6">
    <location>
        <begin position="30"/>
        <end position="932"/>
    </location>
</feature>
<feature type="topological domain" description="Extracellular" evidence="2">
    <location>
        <begin position="30"/>
        <end position="692"/>
    </location>
</feature>
<feature type="transmembrane region" description="Helical" evidence="2">
    <location>
        <begin position="693"/>
        <end position="713"/>
    </location>
</feature>
<feature type="topological domain" description="Cytoplasmic" evidence="2">
    <location>
        <begin position="714"/>
        <end position="932"/>
    </location>
</feature>
<feature type="domain" description="Cadherin 1" evidence="3">
    <location>
        <begin position="30"/>
        <end position="133"/>
    </location>
</feature>
<feature type="domain" description="Cadherin 2" evidence="3">
    <location>
        <begin position="134"/>
        <end position="242"/>
    </location>
</feature>
<feature type="domain" description="Cadherin 3" evidence="3">
    <location>
        <begin position="243"/>
        <end position="347"/>
    </location>
</feature>
<feature type="domain" description="Cadherin 4" evidence="3">
    <location>
        <begin position="348"/>
        <end position="452"/>
    </location>
</feature>
<feature type="domain" description="Cadherin 5" evidence="3">
    <location>
        <begin position="453"/>
        <end position="562"/>
    </location>
</feature>
<feature type="domain" description="Cadherin 6" evidence="3">
    <location>
        <begin position="570"/>
        <end position="682"/>
    </location>
</feature>
<feature type="region of interest" description="Disordered" evidence="4">
    <location>
        <begin position="804"/>
        <end position="841"/>
    </location>
</feature>
<feature type="region of interest" description="Disordered" evidence="4">
    <location>
        <begin position="902"/>
        <end position="932"/>
    </location>
</feature>
<feature type="compositionally biased region" description="Polar residues" evidence="4">
    <location>
        <begin position="806"/>
        <end position="841"/>
    </location>
</feature>
<feature type="compositionally biased region" description="Basic residues" evidence="4">
    <location>
        <begin position="922"/>
        <end position="932"/>
    </location>
</feature>
<feature type="glycosylation site" description="N-linked (GlcNAc...) asparagine" evidence="2">
    <location>
        <position position="81"/>
    </location>
</feature>
<feature type="glycosylation site" description="N-linked (GlcNAc...) asparagine" evidence="2">
    <location>
        <position position="419"/>
    </location>
</feature>
<feature type="glycosylation site" description="N-linked (GlcNAc...) asparagine" evidence="2">
    <location>
        <position position="545"/>
    </location>
</feature>
<feature type="glycosylation site" description="N-linked (GlcNAc...) asparagine" evidence="2">
    <location>
        <position position="685"/>
    </location>
</feature>
<feature type="splice variant" id="VSP_008669" description="In isoform 2." evidence="5 6">
    <original>QAPPNTDWRF</original>
    <variation>VSFFPPKREE</variation>
    <location>
        <begin position="809"/>
        <end position="818"/>
    </location>
</feature>
<feature type="splice variant" id="VSP_008670" description="In isoform 2." evidence="5 6">
    <location>
        <begin position="819"/>
        <end position="932"/>
    </location>
</feature>
<feature type="sequence variant" id="VAR_048560" description="In dbSNP:rs11575953.">
    <original>R</original>
    <variation>S</variation>
    <location>
        <position position="248"/>
    </location>
</feature>
<accession>Q9Y5G7</accession>
<accession>A6H8K7</accession>
<accession>B2RN55</accession>
<accession>Q9Y5D1</accession>
<protein>
    <recommendedName>
        <fullName>Protocadherin gamma-A6</fullName>
        <shortName>PCDH-gamma-A6</shortName>
    </recommendedName>
</protein>